<accession>Q0C9L7</accession>
<feature type="chain" id="PRO_0000437743" description="Highly reducing polyketide synthase ctvA">
    <location>
        <begin position="1"/>
        <end position="2438"/>
    </location>
</feature>
<feature type="domain" description="Ketosynthase family 3 (KS3)" evidence="4">
    <location>
        <begin position="4"/>
        <end position="364"/>
    </location>
</feature>
<feature type="domain" description="PKS/mFAS DH" evidence="5">
    <location>
        <begin position="866"/>
        <end position="1159"/>
    </location>
</feature>
<feature type="domain" description="Carrier" evidence="3">
    <location>
        <begin position="2318"/>
        <end position="2396"/>
    </location>
</feature>
<feature type="region of interest" description="Malonyl-CoA:ACP transacylase (MAT) domain" evidence="2">
    <location>
        <begin position="475"/>
        <end position="777"/>
    </location>
</feature>
<feature type="region of interest" description="Dehydratase (DH) domain" evidence="2">
    <location>
        <begin position="866"/>
        <end position="1153"/>
    </location>
</feature>
<feature type="region of interest" description="N-terminal hotdog fold" evidence="5">
    <location>
        <begin position="866"/>
        <end position="1001"/>
    </location>
</feature>
<feature type="region of interest" description="C-terminal hotdog fold" evidence="5">
    <location>
        <begin position="1018"/>
        <end position="1159"/>
    </location>
</feature>
<feature type="region of interest" description="Methyltransferase (CMet) domain" evidence="2">
    <location>
        <begin position="1297"/>
        <end position="1492"/>
    </location>
</feature>
<feature type="region of interest" description="Ketoreductase (KR) domain" evidence="2">
    <location>
        <begin position="2022"/>
        <end position="2193"/>
    </location>
</feature>
<feature type="region of interest" description="Disordered" evidence="7">
    <location>
        <begin position="2402"/>
        <end position="2438"/>
    </location>
</feature>
<feature type="compositionally biased region" description="Basic and acidic residues" evidence="7">
    <location>
        <begin position="2411"/>
        <end position="2422"/>
    </location>
</feature>
<feature type="active site" description="For beta-ketoacyl synthase activity" evidence="4">
    <location>
        <position position="105"/>
    </location>
</feature>
<feature type="active site" description="For beta-ketoacyl synthase activity" evidence="4">
    <location>
        <position position="244"/>
    </location>
</feature>
<feature type="active site" description="For beta-ketoacyl synthase activity" evidence="4">
    <location>
        <position position="284"/>
    </location>
</feature>
<feature type="active site" description="For malonyltransferase activity" evidence="6">
    <location>
        <position position="569"/>
    </location>
</feature>
<feature type="active site" description="Proton acceptor; for dehydratase activity" evidence="5">
    <location>
        <position position="898"/>
    </location>
</feature>
<feature type="active site" description="Proton donor; for dehydratase activity" evidence="5">
    <location>
        <position position="1074"/>
    </location>
</feature>
<feature type="modified residue" description="O-(pantetheine 4'-phosphoryl)serine" evidence="3">
    <location>
        <position position="2356"/>
    </location>
</feature>
<name>CTVA_ASPTN</name>
<dbReference type="EC" id="2.3.1.-" evidence="11"/>
<dbReference type="EMBL" id="CH476608">
    <property type="protein sequence ID" value="EAU29808.1"/>
    <property type="molecule type" value="Genomic_DNA"/>
</dbReference>
<dbReference type="RefSeq" id="XP_001218239.1">
    <property type="nucleotide sequence ID" value="XM_001218238.1"/>
</dbReference>
<dbReference type="SMR" id="Q0C9L7"/>
<dbReference type="STRING" id="341663.Q0C9L7"/>
<dbReference type="EnsemblFungi" id="EAU29808">
    <property type="protein sequence ID" value="EAU29808"/>
    <property type="gene ID" value="ATEG_09617"/>
</dbReference>
<dbReference type="GeneID" id="4354473"/>
<dbReference type="VEuPathDB" id="FungiDB:ATEG_09617"/>
<dbReference type="eggNOG" id="KOG1202">
    <property type="taxonomic scope" value="Eukaryota"/>
</dbReference>
<dbReference type="HOGENOM" id="CLU_000022_31_0_1"/>
<dbReference type="OMA" id="RDYHSYT"/>
<dbReference type="OrthoDB" id="329835at2759"/>
<dbReference type="Proteomes" id="UP000007963">
    <property type="component" value="Unassembled WGS sequence"/>
</dbReference>
<dbReference type="GO" id="GO:0004315">
    <property type="term" value="F:3-oxoacyl-[acyl-carrier-protein] synthase activity"/>
    <property type="evidence" value="ECO:0007669"/>
    <property type="project" value="InterPro"/>
</dbReference>
<dbReference type="GO" id="GO:0004312">
    <property type="term" value="F:fatty acid synthase activity"/>
    <property type="evidence" value="ECO:0007669"/>
    <property type="project" value="TreeGrafter"/>
</dbReference>
<dbReference type="GO" id="GO:0008168">
    <property type="term" value="F:methyltransferase activity"/>
    <property type="evidence" value="ECO:0007669"/>
    <property type="project" value="UniProtKB-KW"/>
</dbReference>
<dbReference type="GO" id="GO:0016491">
    <property type="term" value="F:oxidoreductase activity"/>
    <property type="evidence" value="ECO:0007669"/>
    <property type="project" value="UniProtKB-KW"/>
</dbReference>
<dbReference type="GO" id="GO:0031177">
    <property type="term" value="F:phosphopantetheine binding"/>
    <property type="evidence" value="ECO:0007669"/>
    <property type="project" value="InterPro"/>
</dbReference>
<dbReference type="GO" id="GO:0006633">
    <property type="term" value="P:fatty acid biosynthetic process"/>
    <property type="evidence" value="ECO:0007669"/>
    <property type="project" value="InterPro"/>
</dbReference>
<dbReference type="GO" id="GO:0032259">
    <property type="term" value="P:methylation"/>
    <property type="evidence" value="ECO:0007669"/>
    <property type="project" value="UniProtKB-KW"/>
</dbReference>
<dbReference type="GO" id="GO:0044550">
    <property type="term" value="P:secondary metabolite biosynthetic process"/>
    <property type="evidence" value="ECO:0007669"/>
    <property type="project" value="TreeGrafter"/>
</dbReference>
<dbReference type="CDD" id="cd02440">
    <property type="entry name" value="AdoMet_MTases"/>
    <property type="match status" value="1"/>
</dbReference>
<dbReference type="CDD" id="cd00833">
    <property type="entry name" value="PKS"/>
    <property type="match status" value="1"/>
</dbReference>
<dbReference type="Gene3D" id="3.40.47.10">
    <property type="match status" value="2"/>
</dbReference>
<dbReference type="Gene3D" id="1.10.1200.10">
    <property type="entry name" value="ACP-like"/>
    <property type="match status" value="1"/>
</dbReference>
<dbReference type="Gene3D" id="3.40.366.10">
    <property type="entry name" value="Malonyl-Coenzyme A Acyl Carrier Protein, domain 2"/>
    <property type="match status" value="1"/>
</dbReference>
<dbReference type="Gene3D" id="3.40.50.720">
    <property type="entry name" value="NAD(P)-binding Rossmann-like Domain"/>
    <property type="match status" value="1"/>
</dbReference>
<dbReference type="Gene3D" id="3.10.129.110">
    <property type="entry name" value="Polyketide synthase dehydratase"/>
    <property type="match status" value="1"/>
</dbReference>
<dbReference type="Gene3D" id="3.40.50.150">
    <property type="entry name" value="Vaccinia Virus protein VP39"/>
    <property type="match status" value="1"/>
</dbReference>
<dbReference type="InterPro" id="IPR001227">
    <property type="entry name" value="Ac_transferase_dom_sf"/>
</dbReference>
<dbReference type="InterPro" id="IPR036736">
    <property type="entry name" value="ACP-like_sf"/>
</dbReference>
<dbReference type="InterPro" id="IPR014043">
    <property type="entry name" value="Acyl_transferase_dom"/>
</dbReference>
<dbReference type="InterPro" id="IPR016035">
    <property type="entry name" value="Acyl_Trfase/lysoPLipase"/>
</dbReference>
<dbReference type="InterPro" id="IPR018201">
    <property type="entry name" value="Ketoacyl_synth_AS"/>
</dbReference>
<dbReference type="InterPro" id="IPR014031">
    <property type="entry name" value="Ketoacyl_synth_C"/>
</dbReference>
<dbReference type="InterPro" id="IPR014030">
    <property type="entry name" value="Ketoacyl_synth_N"/>
</dbReference>
<dbReference type="InterPro" id="IPR016036">
    <property type="entry name" value="Malonyl_transacylase_ACP-bd"/>
</dbReference>
<dbReference type="InterPro" id="IPR013217">
    <property type="entry name" value="Methyltransf_12"/>
</dbReference>
<dbReference type="InterPro" id="IPR036291">
    <property type="entry name" value="NAD(P)-bd_dom_sf"/>
</dbReference>
<dbReference type="InterPro" id="IPR032821">
    <property type="entry name" value="PKS_assoc"/>
</dbReference>
<dbReference type="InterPro" id="IPR020841">
    <property type="entry name" value="PKS_Beta-ketoAc_synthase_dom"/>
</dbReference>
<dbReference type="InterPro" id="IPR042104">
    <property type="entry name" value="PKS_dehydratase_sf"/>
</dbReference>
<dbReference type="InterPro" id="IPR020807">
    <property type="entry name" value="PKS_DH"/>
</dbReference>
<dbReference type="InterPro" id="IPR049551">
    <property type="entry name" value="PKS_DH_C"/>
</dbReference>
<dbReference type="InterPro" id="IPR049552">
    <property type="entry name" value="PKS_DH_N"/>
</dbReference>
<dbReference type="InterPro" id="IPR013968">
    <property type="entry name" value="PKS_KR"/>
</dbReference>
<dbReference type="InterPro" id="IPR049900">
    <property type="entry name" value="PKS_mFAS_DH"/>
</dbReference>
<dbReference type="InterPro" id="IPR050091">
    <property type="entry name" value="PKS_NRPS_Biosynth_Enz"/>
</dbReference>
<dbReference type="InterPro" id="IPR020806">
    <property type="entry name" value="PKS_PP-bd"/>
</dbReference>
<dbReference type="InterPro" id="IPR009081">
    <property type="entry name" value="PP-bd_ACP"/>
</dbReference>
<dbReference type="InterPro" id="IPR006162">
    <property type="entry name" value="Ppantetheine_attach_site"/>
</dbReference>
<dbReference type="InterPro" id="IPR029063">
    <property type="entry name" value="SAM-dependent_MTases_sf"/>
</dbReference>
<dbReference type="InterPro" id="IPR016039">
    <property type="entry name" value="Thiolase-like"/>
</dbReference>
<dbReference type="PANTHER" id="PTHR43775">
    <property type="entry name" value="FATTY ACID SYNTHASE"/>
    <property type="match status" value="1"/>
</dbReference>
<dbReference type="PANTHER" id="PTHR43775:SF20">
    <property type="entry name" value="HYBRID PKS-NRPS SYNTHETASE APDA"/>
    <property type="match status" value="1"/>
</dbReference>
<dbReference type="Pfam" id="PF00698">
    <property type="entry name" value="Acyl_transf_1"/>
    <property type="match status" value="1"/>
</dbReference>
<dbReference type="Pfam" id="PF16197">
    <property type="entry name" value="KAsynt_C_assoc"/>
    <property type="match status" value="1"/>
</dbReference>
<dbReference type="Pfam" id="PF00109">
    <property type="entry name" value="ketoacyl-synt"/>
    <property type="match status" value="2"/>
</dbReference>
<dbReference type="Pfam" id="PF02801">
    <property type="entry name" value="Ketoacyl-synt_C"/>
    <property type="match status" value="1"/>
</dbReference>
<dbReference type="Pfam" id="PF08659">
    <property type="entry name" value="KR"/>
    <property type="match status" value="1"/>
</dbReference>
<dbReference type="Pfam" id="PF08242">
    <property type="entry name" value="Methyltransf_12"/>
    <property type="match status" value="1"/>
</dbReference>
<dbReference type="Pfam" id="PF21089">
    <property type="entry name" value="PKS_DH_N"/>
    <property type="match status" value="1"/>
</dbReference>
<dbReference type="Pfam" id="PF00550">
    <property type="entry name" value="PP-binding"/>
    <property type="match status" value="1"/>
</dbReference>
<dbReference type="Pfam" id="PF14765">
    <property type="entry name" value="PS-DH"/>
    <property type="match status" value="1"/>
</dbReference>
<dbReference type="SMART" id="SM00827">
    <property type="entry name" value="PKS_AT"/>
    <property type="match status" value="1"/>
</dbReference>
<dbReference type="SMART" id="SM00826">
    <property type="entry name" value="PKS_DH"/>
    <property type="match status" value="1"/>
</dbReference>
<dbReference type="SMART" id="SM00822">
    <property type="entry name" value="PKS_KR"/>
    <property type="match status" value="1"/>
</dbReference>
<dbReference type="SMART" id="SM00825">
    <property type="entry name" value="PKS_KS"/>
    <property type="match status" value="1"/>
</dbReference>
<dbReference type="SMART" id="SM00823">
    <property type="entry name" value="PKS_PP"/>
    <property type="match status" value="1"/>
</dbReference>
<dbReference type="SUPFAM" id="SSF47336">
    <property type="entry name" value="ACP-like"/>
    <property type="match status" value="1"/>
</dbReference>
<dbReference type="SUPFAM" id="SSF52151">
    <property type="entry name" value="FabD/lysophospholipase-like"/>
    <property type="match status" value="1"/>
</dbReference>
<dbReference type="SUPFAM" id="SSF51735">
    <property type="entry name" value="NAD(P)-binding Rossmann-fold domains"/>
    <property type="match status" value="1"/>
</dbReference>
<dbReference type="SUPFAM" id="SSF55048">
    <property type="entry name" value="Probable ACP-binding domain of malonyl-CoA ACP transacylase"/>
    <property type="match status" value="1"/>
</dbReference>
<dbReference type="SUPFAM" id="SSF53335">
    <property type="entry name" value="S-adenosyl-L-methionine-dependent methyltransferases"/>
    <property type="match status" value="1"/>
</dbReference>
<dbReference type="SUPFAM" id="SSF53901">
    <property type="entry name" value="Thiolase-like"/>
    <property type="match status" value="1"/>
</dbReference>
<dbReference type="PROSITE" id="PS50075">
    <property type="entry name" value="CARRIER"/>
    <property type="match status" value="1"/>
</dbReference>
<dbReference type="PROSITE" id="PS00606">
    <property type="entry name" value="KS3_1"/>
    <property type="match status" value="1"/>
</dbReference>
<dbReference type="PROSITE" id="PS52004">
    <property type="entry name" value="KS3_2"/>
    <property type="match status" value="1"/>
</dbReference>
<dbReference type="PROSITE" id="PS00012">
    <property type="entry name" value="PHOSPHOPANTETHEINE"/>
    <property type="match status" value="1"/>
</dbReference>
<dbReference type="PROSITE" id="PS52019">
    <property type="entry name" value="PKS_MFAS_DH"/>
    <property type="match status" value="1"/>
</dbReference>
<proteinExistence type="evidence at protein level"/>
<organism>
    <name type="scientific">Aspergillus terreus (strain NIH 2624 / FGSC A1156)</name>
    <dbReference type="NCBI Taxonomy" id="341663"/>
    <lineage>
        <taxon>Eukaryota</taxon>
        <taxon>Fungi</taxon>
        <taxon>Dikarya</taxon>
        <taxon>Ascomycota</taxon>
        <taxon>Pezizomycotina</taxon>
        <taxon>Eurotiomycetes</taxon>
        <taxon>Eurotiomycetidae</taxon>
        <taxon>Eurotiales</taxon>
        <taxon>Aspergillaceae</taxon>
        <taxon>Aspergillus</taxon>
        <taxon>Aspergillus subgen. Circumdati</taxon>
    </lineage>
</organism>
<evidence type="ECO:0000250" key="1">
    <source>
        <dbReference type="UniProtKB" id="Q9Y8A5"/>
    </source>
</evidence>
<evidence type="ECO:0000255" key="2"/>
<evidence type="ECO:0000255" key="3">
    <source>
        <dbReference type="PROSITE-ProRule" id="PRU00258"/>
    </source>
</evidence>
<evidence type="ECO:0000255" key="4">
    <source>
        <dbReference type="PROSITE-ProRule" id="PRU01348"/>
    </source>
</evidence>
<evidence type="ECO:0000255" key="5">
    <source>
        <dbReference type="PROSITE-ProRule" id="PRU01363"/>
    </source>
</evidence>
<evidence type="ECO:0000255" key="6">
    <source>
        <dbReference type="PROSITE-ProRule" id="PRU10022"/>
    </source>
</evidence>
<evidence type="ECO:0000256" key="7">
    <source>
        <dbReference type="SAM" id="MobiDB-lite"/>
    </source>
</evidence>
<evidence type="ECO:0000269" key="8">
    <source>
    </source>
</evidence>
<evidence type="ECO:0000269" key="9">
    <source>
    </source>
</evidence>
<evidence type="ECO:0000269" key="10">
    <source>
    </source>
</evidence>
<evidence type="ECO:0000269" key="11">
    <source>
    </source>
</evidence>
<evidence type="ECO:0000303" key="12">
    <source>
    </source>
</evidence>
<evidence type="ECO:0000305" key="13">
    <source>
    </source>
</evidence>
<gene>
    <name evidence="12" type="primary">ctvA</name>
    <name type="ORF">ATEG_09617</name>
</gene>
<sequence>MAHMEPIAIVGTACRFAGSSSSPSKLWELLQNPRDVASEPPADRFNIDAFYDPEGSNPMATNARQGVSCAAPQYGSVGVARNNLANRISYFFDWQGPSMSIDTACSASMVALYEAVSALTRHDCNLAAALGANLMLSPQMFIAASNLQMLSPTSRSRMWDAQADGYARGEGVASVLLKRLSDAVADGDPIECVIRAVGVNHDGRSMGFTMPSSDAQVQLIRSTYAKAGLDPRSAEDRPQYVEAHGTGTLAGDPQEASALHQAFFSSSDEDTVLHVGSIKTVVGHAEGTAGLAGLIKASQCIQHGIIPPNLLFNRLNPALEPYARQLRVPVDVVPWPPLSPGVPRRVSVNSFGFGGTNAHVILESYEPAEGLIKVDCNQNAVLPFVFSAESDFSLGSVLEQYSRYLSRNPDVEVHDLAWTLLERRSALMHRVGFWAPDIAHLKRSIQDELAVRKGGAPSTLICRPHGKTRKHILGVFTGQGAQWAQMGLELITTSNTARGWLDELQQSLDALPEPYRPGFSLFQELAADSATSRLSEALLSQTLCTAMQVIWVKMLWALNIHFDAVVGHSSGEIAAGFAAGFLTAEDAIRIAYLRGVFCSAPGSSGEGAMLAAGLSMDEATALCEDVSSSEGRINVAASNSPESVTVSGDRDAILRAEQLLKDRGIFVRLLRVSTAYHSHHMQACSQPYQDALRGCNIQIQTPMSTTTWYSSVYAGRPMEEGSVTETLGTGEYWAENLVSPVLFSQALSAAMSATNPSLIVEVGPHPALKGPALQTLSGITPAEIPYIGVSVRNNSAIESMATAIGAFWAHLGPQAINPRGYLALFQPNTKPSVVRGLPLYPFDHRQEHGYQTRKANGWLYRRNTPHPLLGSLSEDLGEGELRWNHYLSPRRIRWLDGHRVQGQIVVPATAYIVMALEAALALAVVKEKSLHLIRIDDLIIGQAISFQDERDEVETLFHLPPMLENRDDNTAVGRFRCQMAASGGHIKTCAEGILTVTWGSPQDDVLPCPVFPSPAGLADVTDMEEYYASLRTLGYEYTGVFQGIHSLSRKMGIATGQVYNPALTGFLIHPAVLDTGLQGLLAAAGEGQLTTLHVPTRIDTVSVNPAVCSIDSLSFEAAVTRTGADGIVGDVELYTAANGPGAVFFEGVHVSSLVPPSAADDPSVFWVQHWTPLVLDVNRSESRLSPEWMTVLEGYERRAFLALKDILQEVTPELRATFDWHRESVVSWIEHIMEETRMGQRASCKPEWLGQNLENLGHIWGRPDASIEDRMMYRVYQNLLPFLRGEAKMLDALRQDELLTQFYRDEHELRDVNRRLGQLVGDLAVRFPRMKLLEVGAGTGSATREVLKHVSRAYHSYTFTDISVGFFEDMLETLPEHADRLIFQKLDVGQDPLEQGFTENAYDVIIAANVLHATPALHETLRNVRRLLKPGGYLIALEITNIDAIRIGYLMCAFDGWWLGREDGRPWGPVVSASQWDSLLRETGFGGIDSITDRAADELTMYSVFAAQAVDDQITRIREPLTPLPPQPPFCRGVIIGGSPNLVTGVRAIIHPFFSDVEHVSAIENLTEGAPAVVLMVADLSDTPCFQSLTESRLAGLKALVKMAEKTLWVTMGSEAENPFLCLSKGFLTSMNYEHPNVFQYLNIIDPADVQPVVLSEHLLRLAHTTQNNDFTLTSCVHSTELELRLYPGGILKFPRINASNVLNRRYAAARRPVTSPVTDMQESVVVLGQGPDGKLQLLLGEERLLGDRTGVTINVRYSTNRAVRINGAGYLVLVLGQDKVTKTRLVALAGQSASVISTSCYWEIPADISEEQEAAYLYATATALLAASLIQSNGTTILVHGADAILRHAIAIEAASRVVQPIFTTTSPSAASSTGFGKSILVHQNESRRQLAHLLPRYFTAAVNFDSNDHRLFDRMMAIGHQSGVTQEHLLTTLTAVLPRPSASSLPAHPQAVIDALRKAALTAYQLTVQSTAPGHIATSIADIQSCSQELAVADWTPPCGSVPVHLQPASQLVRLSAQKTYLLVGMTGALGQSITQWLIARGARNIVLTSRNPSVDPAWILEMQSTTGARVLVTSMDVTSRASILAVAHALKAGWPPLGGVVNGAMVLWDQLFVDAPLSVLTGQLAPKVQGSLLLDEIFGQEPGLDFFILFGSAIATIGNLGQSAYTAASNFMVALAARRRARGLVASVLQPAQVAGTMGYLRDKDDSFWARMFDMIGRHLVSEPDLHELFAHAILSGRGPPSDVGFGPGEGECVIGGLSVQDPAVYPNILWFRTPKVWPFIHYHHEGTGPSSAATGSVPLVEQLKCATSLAQVGEVVEAGVAAKLHHRLHLPGEVGSGNVTGDTRLTELGVDSLIAVDLRRWFAQELEVDIPVLQMLSGCSVKELAAAATALLQPKFYPGVVGDSDVGSEKDGSSDSRGDTSSSSYQVITPEESD</sequence>
<comment type="function">
    <text evidence="11">Highly reducing polyketide synthase (HR-PKS); part of the gene cluster that mediates the biosynthesis of citreoviridin, an inhibitor of the of F1-ATPase beta-subunit (PubMed:26954888). The HR-PKS ctvA accepts acetyl-CoA as the starter unit and catalyzes eight iterations of malonyl-CoA extension and four iterations of SAM-dependent methylation at C4, C12, C14, and C16 (PubMed:26954888). The KR and DH domains selectively act on the first six iterations to generate the hexaene chain (PubMed:26954888). In the last three iterations, the KR and DH domains terminate their functions to yield a beta,delta-diketo ester moiety, which then undergoes intramolecular cyclization to yield an alpha-pyrone intermediate (PubMed:26954888). Subsequently, ctvB methylates the alpha-pyrone hydroxyl group to generate citreomontanin (PubMed:26954888). In order to form the tetrahydrofuran ring with the correct stereochemistry, the terminal alkenes of citreomontanin need to undergo isomerization to yield a (17Z)-hexaene, a step that could be catalyzed by ctvC (PubMed:26954888). The (17Z)-hexaene then undergoes bisepoxidation by ctvC to form a (17R,16R,15S,14R)-bisepoxide moiety (PubMed:26954888). Lastly, ctvD acts as a regioselective hydrolase to form the tetrahydrofuran ring with the substituents in the correct absolute configuration, completing the biosynthesis of citreoviridin (PubMed:26954888).</text>
</comment>
<comment type="cofactor">
    <cofactor evidence="1">
        <name>pantetheine 4'-phosphate</name>
        <dbReference type="ChEBI" id="CHEBI:47942"/>
    </cofactor>
    <text evidence="1">Binds 1 phosphopantetheine covalently.</text>
</comment>
<comment type="pathway">
    <text evidence="13">Mycotoxin biosynthesis.</text>
</comment>
<comment type="biotechnology">
    <text evidence="8 9 10">Citreoviridin inhibits mitochondrial oxidative phosphorylation by binding to the beta-subunit of F1-ATPase (PubMed:2523213). Ectopic mitochondrial ATP synthase is a factor that mediates HIV-1 transfer between antigen-presenting cells (APCs) and CD4+ target cells, and citreoviridin can completely block antigen-presenting cell (APC)-mediated transfer of HIV-1 at the APC-target cells (PubMed:22753871). Inhibition of Ectopic mitochondrial ATP synthase by citreoviridin can also lead to suppression of cancer growth by activating the unfolded protein response (PubMed:22822083).</text>
</comment>
<protein>
    <recommendedName>
        <fullName evidence="12">Highly reducing polyketide synthase ctvA</fullName>
        <shortName evidence="12">HR-PKS ctvA</shortName>
        <ecNumber evidence="11">2.3.1.-</ecNumber>
    </recommendedName>
    <alternativeName>
        <fullName evidence="12">Citreoviridin biosynthesis protein A</fullName>
    </alternativeName>
</protein>
<reference key="1">
    <citation type="submission" date="2005-09" db="EMBL/GenBank/DDBJ databases">
        <title>Annotation of the Aspergillus terreus NIH2624 genome.</title>
        <authorList>
            <person name="Birren B.W."/>
            <person name="Lander E.S."/>
            <person name="Galagan J.E."/>
            <person name="Nusbaum C."/>
            <person name="Devon K."/>
            <person name="Henn M."/>
            <person name="Ma L.-J."/>
            <person name="Jaffe D.B."/>
            <person name="Butler J."/>
            <person name="Alvarez P."/>
            <person name="Gnerre S."/>
            <person name="Grabherr M."/>
            <person name="Kleber M."/>
            <person name="Mauceli E.W."/>
            <person name="Brockman W."/>
            <person name="Rounsley S."/>
            <person name="Young S.K."/>
            <person name="LaButti K."/>
            <person name="Pushparaj V."/>
            <person name="DeCaprio D."/>
            <person name="Crawford M."/>
            <person name="Koehrsen M."/>
            <person name="Engels R."/>
            <person name="Montgomery P."/>
            <person name="Pearson M."/>
            <person name="Howarth C."/>
            <person name="Larson L."/>
            <person name="Luoma S."/>
            <person name="White J."/>
            <person name="Alvarado L."/>
            <person name="Kodira C.D."/>
            <person name="Zeng Q."/>
            <person name="Oleary S."/>
            <person name="Yandava C."/>
            <person name="Denning D.W."/>
            <person name="Nierman W.C."/>
            <person name="Milne T."/>
            <person name="Madden K."/>
        </authorList>
    </citation>
    <scope>NUCLEOTIDE SEQUENCE [LARGE SCALE GENOMIC DNA]</scope>
    <source>
        <strain>NIH 2624 / FGSC A1156</strain>
    </source>
</reference>
<reference key="2">
    <citation type="journal article" date="1989" name="Arch. Biochem. Biophys.">
        <title>Effect of citreoviridin and isocitreoviridin on beef heart mitochondrial ATPase.</title>
        <authorList>
            <person name="Sayood S.F."/>
            <person name="Suh H."/>
            <person name="Wilcox C.S."/>
            <person name="Schuster S.M."/>
        </authorList>
    </citation>
    <scope>BIOTECHNOLOGY</scope>
</reference>
<reference key="3">
    <citation type="journal article" date="2012" name="Blood">
        <title>Ectopic ATP synthase facilitates transfer of HIV-1 from antigen-presenting cells to CD4(+) target cells.</title>
        <authorList>
            <person name="Yavlovich A."/>
            <person name="Viard M."/>
            <person name="Zhou M."/>
            <person name="Veenstra T.D."/>
            <person name="Wang J.M."/>
            <person name="Gong W."/>
            <person name="Heldman E."/>
            <person name="Blumenthal R."/>
            <person name="Raviv Y."/>
        </authorList>
    </citation>
    <scope>BIOTECHNOLOGY</scope>
</reference>
<reference key="4">
    <citation type="journal article" date="2012" name="Cancer Res.">
        <title>Ectopic ATP synthase blockade suppresses lung adenocarcinoma growth by activating the unfolded protein response.</title>
        <authorList>
            <person name="Chang H.Y."/>
            <person name="Huang H.C."/>
            <person name="Huang T.C."/>
            <person name="Yang P.C."/>
            <person name="Wang Y.C."/>
            <person name="Juan H.F."/>
        </authorList>
    </citation>
    <scope>BIOTECHNOLOGY</scope>
</reference>
<reference key="5">
    <citation type="journal article" date="2016" name="Org. Lett.">
        <title>Biosynthetic pathway of the reduced polyketide product citreoviridin in Aspergillus terreus var. aureus revealed by heterologous expression in Aspergillus nidulans.</title>
        <authorList>
            <person name="Lin T.S."/>
            <person name="Chiang Y.M."/>
            <person name="Wang C.C."/>
        </authorList>
    </citation>
    <scope>FUNCTION</scope>
    <scope>PATHWAY</scope>
</reference>
<keyword id="KW-0012">Acyltransferase</keyword>
<keyword id="KW-0489">Methyltransferase</keyword>
<keyword id="KW-0511">Multifunctional enzyme</keyword>
<keyword id="KW-0521">NADP</keyword>
<keyword id="KW-0560">Oxidoreductase</keyword>
<keyword id="KW-0596">Phosphopantetheine</keyword>
<keyword id="KW-0597">Phosphoprotein</keyword>
<keyword id="KW-1185">Reference proteome</keyword>
<keyword id="KW-0949">S-adenosyl-L-methionine</keyword>
<keyword id="KW-0808">Transferase</keyword>